<reference evidence="5" key="1">
    <citation type="journal article" date="2022" name="J. Insect Physiol.">
        <title>Proteotranscriptomics reveals the secretory dynamics of teratocytes, regulators of parasitization by an endoparasitoid wasp.</title>
        <authorList>
            <person name="Pinto C.P.G."/>
            <person name="Walker A.A."/>
            <person name="Robinson S.D."/>
            <person name="King G.F."/>
            <person name="Rossi G.D."/>
        </authorList>
    </citation>
    <scope>NUCLEOTIDE SEQUENCE [MRNA]</scope>
</reference>
<reference key="2">
    <citation type="journal article" date="2022" name="Insect Sci.">
        <title>Immunosuppressive, antimicrobial and insecticidal activities of inhibitor cystine knot peptides produced by teratocytes of the endoparasitoid wasp Cotesia flavipes (Hymenoptera: Braconidae).</title>
        <authorList>
            <person name="Pinto C.P.G."/>
            <person name="Walker A.A."/>
            <person name="King G.F."/>
            <person name="Rossi G.D."/>
        </authorList>
    </citation>
    <scope>FUNCTION</scope>
    <scope>SYNTHESIS OF 25-58</scope>
</reference>
<dbReference type="EMBL" id="MZ746715">
    <property type="protein sequence ID" value="UEP64308.1"/>
    <property type="molecule type" value="mRNA"/>
</dbReference>
<dbReference type="GO" id="GO:0005576">
    <property type="term" value="C:extracellular region"/>
    <property type="evidence" value="ECO:0007669"/>
    <property type="project" value="UniProtKB-SubCell"/>
</dbReference>
<name>TP3_COTFL</name>
<sequence length="58" mass="6805">MQKFMRLFFLGLFFILFMTTQIKADGCLTYDSLCSTMYDKCCTSMKCKGFFFGYCKSI</sequence>
<accession>A0A8K1YTT4</accession>
<feature type="signal peptide" evidence="1">
    <location>
        <begin position="1"/>
        <end position="24"/>
    </location>
</feature>
<feature type="chain" id="PRO_5035418444" description="Teratocyte protein CftICK-III" evidence="4">
    <location>
        <begin position="25"/>
        <end position="58"/>
    </location>
</feature>
<feature type="disulfide bond" evidence="4">
    <location>
        <begin position="27"/>
        <end position="42"/>
    </location>
</feature>
<feature type="disulfide bond" evidence="4">
    <location>
        <begin position="34"/>
        <end position="47"/>
    </location>
</feature>
<feature type="disulfide bond" evidence="4">
    <location>
        <begin position="41"/>
        <end position="55"/>
    </location>
</feature>
<protein>
    <recommendedName>
        <fullName evidence="3">Teratocyte protein CftICK-III</fullName>
    </recommendedName>
</protein>
<comment type="function">
    <text evidence="2">This endoparasitoid wasp peptide has immununosuppressive and insecticidal activities. Suppress cellular immunity which is detectable as a reduction of hemocyte encapsulation in the host. In vivo, ingestion of this peptide (probably at excessive doses) increases larval mortality and reduces leaf consumption in both lepidopteran species D.saccharalis and S.frugiperda, which are permissive and non-permissive hosts for C.flavipes, respectively.</text>
</comment>
<comment type="subcellular location">
    <subcellularLocation>
        <location evidence="4">Secreted</location>
    </subcellularLocation>
</comment>
<comment type="tissue specificity">
    <text evidence="4">Abundantly expressed by teratocytes, which are extra-embryonic cells released by parasitoid wasps into their hosts during larval eclosion.</text>
</comment>
<comment type="domain">
    <text evidence="4">The presence of a 'disulfide through disulfide knot' structurally defines this protein as a knottin.</text>
</comment>
<comment type="miscellaneous">
    <text evidence="2">Negative results: does not influence host total hemocyte count (PubMed:36434808). Does not influence hemocyte spread index in the host (PubMed:36434808). Has no effect on humoral immune system, since it does not influence the activities of prophenoloxidase and phenoloxidase in the hemolymph of larval Diatraea saccharalis (PubMed:36434808).</text>
</comment>
<keyword id="KW-1015">Disulfide bond</keyword>
<keyword id="KW-0964">Secreted</keyword>
<keyword id="KW-0732">Signal</keyword>
<proteinExistence type="inferred from homology"/>
<evidence type="ECO:0000255" key="1"/>
<evidence type="ECO:0000269" key="2">
    <source>
    </source>
</evidence>
<evidence type="ECO:0000303" key="3">
    <source>
    </source>
</evidence>
<evidence type="ECO:0000305" key="4">
    <source>
    </source>
</evidence>
<evidence type="ECO:0000312" key="5">
    <source>
        <dbReference type="EMBL" id="UEP64308.1"/>
    </source>
</evidence>
<organism>
    <name type="scientific">Cotesia flavipes</name>
    <name type="common">Parasitic wasp</name>
    <name type="synonym">Apanteles flavipes</name>
    <dbReference type="NCBI Taxonomy" id="89805"/>
    <lineage>
        <taxon>Eukaryota</taxon>
        <taxon>Metazoa</taxon>
        <taxon>Ecdysozoa</taxon>
        <taxon>Arthropoda</taxon>
        <taxon>Hexapoda</taxon>
        <taxon>Insecta</taxon>
        <taxon>Pterygota</taxon>
        <taxon>Neoptera</taxon>
        <taxon>Endopterygota</taxon>
        <taxon>Hymenoptera</taxon>
        <taxon>Apocrita</taxon>
        <taxon>Ichneumonoidea</taxon>
        <taxon>Braconidae</taxon>
        <taxon>Microgastrinae</taxon>
        <taxon>Cotesia</taxon>
    </lineage>
</organism>